<organism>
    <name type="scientific">Trichodesmium erythraeum (strain IMS101)</name>
    <dbReference type="NCBI Taxonomy" id="203124"/>
    <lineage>
        <taxon>Bacteria</taxon>
        <taxon>Bacillati</taxon>
        <taxon>Cyanobacteriota</taxon>
        <taxon>Cyanophyceae</taxon>
        <taxon>Oscillatoriophycideae</taxon>
        <taxon>Oscillatoriales</taxon>
        <taxon>Microcoleaceae</taxon>
        <taxon>Trichodesmium</taxon>
    </lineage>
</organism>
<evidence type="ECO:0000255" key="1">
    <source>
        <dbReference type="HAMAP-Rule" id="MF_00181"/>
    </source>
</evidence>
<gene>
    <name evidence="1" type="primary">pepA</name>
    <name type="ordered locus">Tery_0069</name>
</gene>
<keyword id="KW-0031">Aminopeptidase</keyword>
<keyword id="KW-0963">Cytoplasm</keyword>
<keyword id="KW-0378">Hydrolase</keyword>
<keyword id="KW-0464">Manganese</keyword>
<keyword id="KW-0479">Metal-binding</keyword>
<keyword id="KW-0645">Protease</keyword>
<proteinExistence type="inferred from homology"/>
<dbReference type="EC" id="3.4.11.1" evidence="1"/>
<dbReference type="EC" id="3.4.11.10" evidence="1"/>
<dbReference type="EMBL" id="CP000393">
    <property type="protein sequence ID" value="ABG49578.1"/>
    <property type="molecule type" value="Genomic_DNA"/>
</dbReference>
<dbReference type="RefSeq" id="WP_011609979.1">
    <property type="nucleotide sequence ID" value="NC_008312.1"/>
</dbReference>
<dbReference type="SMR" id="Q11A96"/>
<dbReference type="STRING" id="203124.Tery_0069"/>
<dbReference type="MEROPS" id="M17.A01"/>
<dbReference type="KEGG" id="ter:Tery_0069"/>
<dbReference type="eggNOG" id="COG0260">
    <property type="taxonomic scope" value="Bacteria"/>
</dbReference>
<dbReference type="HOGENOM" id="CLU_013734_5_1_3"/>
<dbReference type="OrthoDB" id="9809354at2"/>
<dbReference type="GO" id="GO:0005737">
    <property type="term" value="C:cytoplasm"/>
    <property type="evidence" value="ECO:0007669"/>
    <property type="project" value="UniProtKB-SubCell"/>
</dbReference>
<dbReference type="GO" id="GO:0030145">
    <property type="term" value="F:manganese ion binding"/>
    <property type="evidence" value="ECO:0007669"/>
    <property type="project" value="UniProtKB-UniRule"/>
</dbReference>
<dbReference type="GO" id="GO:0070006">
    <property type="term" value="F:metalloaminopeptidase activity"/>
    <property type="evidence" value="ECO:0007669"/>
    <property type="project" value="InterPro"/>
</dbReference>
<dbReference type="GO" id="GO:0006508">
    <property type="term" value="P:proteolysis"/>
    <property type="evidence" value="ECO:0007669"/>
    <property type="project" value="UniProtKB-KW"/>
</dbReference>
<dbReference type="CDD" id="cd00433">
    <property type="entry name" value="Peptidase_M17"/>
    <property type="match status" value="1"/>
</dbReference>
<dbReference type="Gene3D" id="3.40.220.10">
    <property type="entry name" value="Leucine Aminopeptidase, subunit E, domain 1"/>
    <property type="match status" value="1"/>
</dbReference>
<dbReference type="Gene3D" id="3.40.630.10">
    <property type="entry name" value="Zn peptidases"/>
    <property type="match status" value="1"/>
</dbReference>
<dbReference type="HAMAP" id="MF_00181">
    <property type="entry name" value="Cytosol_peptidase_M17"/>
    <property type="match status" value="1"/>
</dbReference>
<dbReference type="InterPro" id="IPR011356">
    <property type="entry name" value="Leucine_aapep/pepB"/>
</dbReference>
<dbReference type="InterPro" id="IPR043472">
    <property type="entry name" value="Macro_dom-like"/>
</dbReference>
<dbReference type="InterPro" id="IPR000819">
    <property type="entry name" value="Peptidase_M17_C"/>
</dbReference>
<dbReference type="InterPro" id="IPR023042">
    <property type="entry name" value="Peptidase_M17_leu_NH2_pept"/>
</dbReference>
<dbReference type="InterPro" id="IPR008283">
    <property type="entry name" value="Peptidase_M17_N"/>
</dbReference>
<dbReference type="NCBIfam" id="NF002073">
    <property type="entry name" value="PRK00913.1-2"/>
    <property type="match status" value="1"/>
</dbReference>
<dbReference type="NCBIfam" id="NF002074">
    <property type="entry name" value="PRK00913.1-4"/>
    <property type="match status" value="1"/>
</dbReference>
<dbReference type="NCBIfam" id="NF002076">
    <property type="entry name" value="PRK00913.2-3"/>
    <property type="match status" value="1"/>
</dbReference>
<dbReference type="NCBIfam" id="NF002083">
    <property type="entry name" value="PRK00913.3-5"/>
    <property type="match status" value="1"/>
</dbReference>
<dbReference type="PANTHER" id="PTHR11963:SF23">
    <property type="entry name" value="CYTOSOL AMINOPEPTIDASE"/>
    <property type="match status" value="1"/>
</dbReference>
<dbReference type="PANTHER" id="PTHR11963">
    <property type="entry name" value="LEUCINE AMINOPEPTIDASE-RELATED"/>
    <property type="match status" value="1"/>
</dbReference>
<dbReference type="Pfam" id="PF00883">
    <property type="entry name" value="Peptidase_M17"/>
    <property type="match status" value="1"/>
</dbReference>
<dbReference type="Pfam" id="PF02789">
    <property type="entry name" value="Peptidase_M17_N"/>
    <property type="match status" value="1"/>
</dbReference>
<dbReference type="PRINTS" id="PR00481">
    <property type="entry name" value="LAMNOPPTDASE"/>
</dbReference>
<dbReference type="SUPFAM" id="SSF52949">
    <property type="entry name" value="Macro domain-like"/>
    <property type="match status" value="1"/>
</dbReference>
<dbReference type="SUPFAM" id="SSF53187">
    <property type="entry name" value="Zn-dependent exopeptidases"/>
    <property type="match status" value="1"/>
</dbReference>
<dbReference type="PROSITE" id="PS00631">
    <property type="entry name" value="CYTOSOL_AP"/>
    <property type="match status" value="1"/>
</dbReference>
<reference key="1">
    <citation type="journal article" date="2015" name="Proc. Natl. Acad. Sci. U.S.A.">
        <title>Trichodesmium genome maintains abundant, widespread noncoding DNA in situ, despite oligotrophic lifestyle.</title>
        <authorList>
            <person name="Walworth N."/>
            <person name="Pfreundt U."/>
            <person name="Nelson W.C."/>
            <person name="Mincer T."/>
            <person name="Heidelberg J.F."/>
            <person name="Fu F."/>
            <person name="Waterbury J.B."/>
            <person name="Glavina del Rio T."/>
            <person name="Goodwin L."/>
            <person name="Kyrpides N.C."/>
            <person name="Land M.L."/>
            <person name="Woyke T."/>
            <person name="Hutchins D.A."/>
            <person name="Hess W.R."/>
            <person name="Webb E.A."/>
        </authorList>
    </citation>
    <scope>NUCLEOTIDE SEQUENCE [LARGE SCALE GENOMIC DNA]</scope>
    <source>
        <strain>IMS101</strain>
    </source>
</reference>
<accession>Q11A96</accession>
<protein>
    <recommendedName>
        <fullName evidence="1">Probable cytosol aminopeptidase</fullName>
        <ecNumber evidence="1">3.4.11.1</ecNumber>
    </recommendedName>
    <alternativeName>
        <fullName evidence="1">Leucine aminopeptidase</fullName>
        <shortName evidence="1">LAP</shortName>
        <ecNumber evidence="1">3.4.11.10</ecNumber>
    </alternativeName>
    <alternativeName>
        <fullName evidence="1">Leucyl aminopeptidase</fullName>
    </alternativeName>
</protein>
<name>AMPA_TRIEI</name>
<comment type="function">
    <text evidence="1">Presumably involved in the processing and regular turnover of intracellular proteins. Catalyzes the removal of unsubstituted N-terminal amino acids from various peptides.</text>
</comment>
<comment type="catalytic activity">
    <reaction evidence="1">
        <text>Release of an N-terminal amino acid, Xaa-|-Yaa-, in which Xaa is preferably Leu, but may be other amino acids including Pro although not Arg or Lys, and Yaa may be Pro. Amino acid amides and methyl esters are also readily hydrolyzed, but rates on arylamides are exceedingly low.</text>
        <dbReference type="EC" id="3.4.11.1"/>
    </reaction>
</comment>
<comment type="catalytic activity">
    <reaction evidence="1">
        <text>Release of an N-terminal amino acid, preferentially leucine, but not glutamic or aspartic acids.</text>
        <dbReference type="EC" id="3.4.11.10"/>
    </reaction>
</comment>
<comment type="cofactor">
    <cofactor evidence="1">
        <name>Mn(2+)</name>
        <dbReference type="ChEBI" id="CHEBI:29035"/>
    </cofactor>
    <text evidence="1">Binds 2 manganese ions per subunit.</text>
</comment>
<comment type="subcellular location">
    <subcellularLocation>
        <location evidence="1">Cytoplasm</location>
    </subcellularLocation>
</comment>
<comment type="similarity">
    <text evidence="1">Belongs to the peptidase M17 family.</text>
</comment>
<feature type="chain" id="PRO_1000019996" description="Probable cytosol aminopeptidase">
    <location>
        <begin position="1"/>
        <end position="496"/>
    </location>
</feature>
<feature type="active site" evidence="1">
    <location>
        <position position="278"/>
    </location>
</feature>
<feature type="active site" evidence="1">
    <location>
        <position position="353"/>
    </location>
</feature>
<feature type="binding site" evidence="1">
    <location>
        <position position="266"/>
    </location>
    <ligand>
        <name>Mn(2+)</name>
        <dbReference type="ChEBI" id="CHEBI:29035"/>
        <label>2</label>
    </ligand>
</feature>
<feature type="binding site" evidence="1">
    <location>
        <position position="271"/>
    </location>
    <ligand>
        <name>Mn(2+)</name>
        <dbReference type="ChEBI" id="CHEBI:29035"/>
        <label>1</label>
    </ligand>
</feature>
<feature type="binding site" evidence="1">
    <location>
        <position position="271"/>
    </location>
    <ligand>
        <name>Mn(2+)</name>
        <dbReference type="ChEBI" id="CHEBI:29035"/>
        <label>2</label>
    </ligand>
</feature>
<feature type="binding site" evidence="1">
    <location>
        <position position="290"/>
    </location>
    <ligand>
        <name>Mn(2+)</name>
        <dbReference type="ChEBI" id="CHEBI:29035"/>
        <label>2</label>
    </ligand>
</feature>
<feature type="binding site" evidence="1">
    <location>
        <position position="349"/>
    </location>
    <ligand>
        <name>Mn(2+)</name>
        <dbReference type="ChEBI" id="CHEBI:29035"/>
        <label>1</label>
    </ligand>
</feature>
<feature type="binding site" evidence="1">
    <location>
        <position position="351"/>
    </location>
    <ligand>
        <name>Mn(2+)</name>
        <dbReference type="ChEBI" id="CHEBI:29035"/>
        <label>1</label>
    </ligand>
</feature>
<feature type="binding site" evidence="1">
    <location>
        <position position="351"/>
    </location>
    <ligand>
        <name>Mn(2+)</name>
        <dbReference type="ChEBI" id="CHEBI:29035"/>
        <label>2</label>
    </ligand>
</feature>
<sequence length="496" mass="52944">MEIKVGNIPQLKWAGDALAIGLFEDAIKLTEDAIELTEEMAELDEMLSGTLSELIKETEFKGKANSSVSTRVGIKTSIRKIIVVGLGKLEKFKLDSLRQAAATCGRLAKKERCKTLGISLPMCQDADSTAIAITEGIELALHQDNRFKSEPENLGPDLEKVELIGLAASDEAIAHARKICSGVIFARELVAAPANSCTPITMAETAQTLAKEFGLTLEILEKEDCEKLGMGAFLGVAQGSDLPPKFIHVTYKPEVTPRRKLAIVGKGLTFDSGGLNLKVSGSGIEMMKIDMGGAGTTFGTIKAIAQLKPDVEVHFISAVTENMVSGHAIHPGDFLTASNGKIIEVNNTDAEGRLTLADALVFAEKLGVDAIIDLATLTGACVVALGNDIAGLWSPNDNLAAEITAAAEKAGEKMWRMPLEEKYFEGLKAMHADMKNTGPRPGGAITAALFLKQFVKNTPWAHLDIAGPVWVDTENGYNNQGATGYGVRTLVNWILS</sequence>